<protein>
    <recommendedName>
        <fullName>Protein pof5</fullName>
    </recommendedName>
</protein>
<organism>
    <name type="scientific">Schizosaccharomyces pombe (strain 972 / ATCC 24843)</name>
    <name type="common">Fission yeast</name>
    <dbReference type="NCBI Taxonomy" id="284812"/>
    <lineage>
        <taxon>Eukaryota</taxon>
        <taxon>Fungi</taxon>
        <taxon>Dikarya</taxon>
        <taxon>Ascomycota</taxon>
        <taxon>Taphrinomycotina</taxon>
        <taxon>Schizosaccharomycetes</taxon>
        <taxon>Schizosaccharomycetales</taxon>
        <taxon>Schizosaccharomycetaceae</taxon>
        <taxon>Schizosaccharomyces</taxon>
    </lineage>
</organism>
<gene>
    <name type="primary">pof5</name>
    <name type="ORF">SPAC6F6.02c</name>
</gene>
<feature type="chain" id="PRO_0000058506" description="Protein pof5">
    <location>
        <begin position="1"/>
        <end position="348"/>
    </location>
</feature>
<evidence type="ECO:0000269" key="1">
    <source>
    </source>
</evidence>
<evidence type="ECO:0000269" key="2">
    <source>
    </source>
</evidence>
<evidence type="ECO:0000305" key="3"/>
<keyword id="KW-0496">Mitochondrion</keyword>
<keyword id="KW-1185">Reference proteome</keyword>
<comment type="subunit">
    <text evidence="1">Interacts with skp1.</text>
</comment>
<comment type="interaction">
    <interactant intactId="EBI-1185512">
        <id>O14235</id>
    </interactant>
    <interactant intactId="EBI-1172248">
        <id>Q9Y709</id>
        <label>skp1</label>
    </interactant>
    <organismsDiffer>false</organismsDiffer>
    <experiments>2</experiments>
</comment>
<comment type="subcellular location">
    <subcellularLocation>
        <location evidence="2">Mitochondrion</location>
    </subcellularLocation>
</comment>
<comment type="similarity">
    <text evidence="3">To yeast YDR306C.</text>
</comment>
<sequence>MQSFPPEIWHHIFDHLISFDKFEAKNFGGLLRICRSSYVGGLHAIYYFPKLNPRNYHKFVDTISRKPTRKLVHHISLNNVSYASKASITSRLLRRCATNLETFSGPQSGLGFTALRAFSQCQKLKKIDLSILSEKIDLQYLFGGIQHLKHLEYIILPYLSIPAPMCTECWPSSLTFVGFSGGLTDDFLAESVFPPSLKSINITQCPLLTDAGIFSLLSKIGPNLSSVCVQYPMPELSRSGLDCIFQLCPNATTISIPANYITSTAFESIPESGHNVRSLEITYSGSLLTNISLIKADDLVGALVDGKLPNLHRLQWSIRLGWREESQDVQDLLELIDDQDGEVFITVK</sequence>
<reference key="1">
    <citation type="journal article" date="2002" name="Nature">
        <title>The genome sequence of Schizosaccharomyces pombe.</title>
        <authorList>
            <person name="Wood V."/>
            <person name="Gwilliam R."/>
            <person name="Rajandream M.A."/>
            <person name="Lyne M.H."/>
            <person name="Lyne R."/>
            <person name="Stewart A."/>
            <person name="Sgouros J.G."/>
            <person name="Peat N."/>
            <person name="Hayles J."/>
            <person name="Baker S.G."/>
            <person name="Basham D."/>
            <person name="Bowman S."/>
            <person name="Brooks K."/>
            <person name="Brown D."/>
            <person name="Brown S."/>
            <person name="Chillingworth T."/>
            <person name="Churcher C.M."/>
            <person name="Collins M."/>
            <person name="Connor R."/>
            <person name="Cronin A."/>
            <person name="Davis P."/>
            <person name="Feltwell T."/>
            <person name="Fraser A."/>
            <person name="Gentles S."/>
            <person name="Goble A."/>
            <person name="Hamlin N."/>
            <person name="Harris D.E."/>
            <person name="Hidalgo J."/>
            <person name="Hodgson G."/>
            <person name="Holroyd S."/>
            <person name="Hornsby T."/>
            <person name="Howarth S."/>
            <person name="Huckle E.J."/>
            <person name="Hunt S."/>
            <person name="Jagels K."/>
            <person name="James K.D."/>
            <person name="Jones L."/>
            <person name="Jones M."/>
            <person name="Leather S."/>
            <person name="McDonald S."/>
            <person name="McLean J."/>
            <person name="Mooney P."/>
            <person name="Moule S."/>
            <person name="Mungall K.L."/>
            <person name="Murphy L.D."/>
            <person name="Niblett D."/>
            <person name="Odell C."/>
            <person name="Oliver K."/>
            <person name="O'Neil S."/>
            <person name="Pearson D."/>
            <person name="Quail M.A."/>
            <person name="Rabbinowitsch E."/>
            <person name="Rutherford K.M."/>
            <person name="Rutter S."/>
            <person name="Saunders D."/>
            <person name="Seeger K."/>
            <person name="Sharp S."/>
            <person name="Skelton J."/>
            <person name="Simmonds M.N."/>
            <person name="Squares R."/>
            <person name="Squares S."/>
            <person name="Stevens K."/>
            <person name="Taylor K."/>
            <person name="Taylor R.G."/>
            <person name="Tivey A."/>
            <person name="Walsh S.V."/>
            <person name="Warren T."/>
            <person name="Whitehead S."/>
            <person name="Woodward J.R."/>
            <person name="Volckaert G."/>
            <person name="Aert R."/>
            <person name="Robben J."/>
            <person name="Grymonprez B."/>
            <person name="Weltjens I."/>
            <person name="Vanstreels E."/>
            <person name="Rieger M."/>
            <person name="Schaefer M."/>
            <person name="Mueller-Auer S."/>
            <person name="Gabel C."/>
            <person name="Fuchs M."/>
            <person name="Duesterhoeft A."/>
            <person name="Fritzc C."/>
            <person name="Holzer E."/>
            <person name="Moestl D."/>
            <person name="Hilbert H."/>
            <person name="Borzym K."/>
            <person name="Langer I."/>
            <person name="Beck A."/>
            <person name="Lehrach H."/>
            <person name="Reinhardt R."/>
            <person name="Pohl T.M."/>
            <person name="Eger P."/>
            <person name="Zimmermann W."/>
            <person name="Wedler H."/>
            <person name="Wambutt R."/>
            <person name="Purnelle B."/>
            <person name="Goffeau A."/>
            <person name="Cadieu E."/>
            <person name="Dreano S."/>
            <person name="Gloux S."/>
            <person name="Lelaure V."/>
            <person name="Mottier S."/>
            <person name="Galibert F."/>
            <person name="Aves S.J."/>
            <person name="Xiang Z."/>
            <person name="Hunt C."/>
            <person name="Moore K."/>
            <person name="Hurst S.M."/>
            <person name="Lucas M."/>
            <person name="Rochet M."/>
            <person name="Gaillardin C."/>
            <person name="Tallada V.A."/>
            <person name="Garzon A."/>
            <person name="Thode G."/>
            <person name="Daga R.R."/>
            <person name="Cruzado L."/>
            <person name="Jimenez J."/>
            <person name="Sanchez M."/>
            <person name="del Rey F."/>
            <person name="Benito J."/>
            <person name="Dominguez A."/>
            <person name="Revuelta J.L."/>
            <person name="Moreno S."/>
            <person name="Armstrong J."/>
            <person name="Forsburg S.L."/>
            <person name="Cerutti L."/>
            <person name="Lowe T."/>
            <person name="McCombie W.R."/>
            <person name="Paulsen I."/>
            <person name="Potashkin J."/>
            <person name="Shpakovski G.V."/>
            <person name="Ussery D."/>
            <person name="Barrell B.G."/>
            <person name="Nurse P."/>
        </authorList>
    </citation>
    <scope>NUCLEOTIDE SEQUENCE [LARGE SCALE GENOMIC DNA]</scope>
    <source>
        <strain>972 / ATCC 24843</strain>
    </source>
</reference>
<reference key="2">
    <citation type="journal article" date="2004" name="Genes Cells">
        <title>Molecular interactions of fission yeast Skp1 and its role in the DNA damage checkpoint.</title>
        <authorList>
            <person name="Lehmann A."/>
            <person name="Katayama S."/>
            <person name="Harrison C."/>
            <person name="Dhut S."/>
            <person name="Kitamura K."/>
            <person name="McDonald N."/>
            <person name="Toda T."/>
        </authorList>
    </citation>
    <scope>INTERACTION WITH SKP1</scope>
</reference>
<reference key="3">
    <citation type="journal article" date="2006" name="Nat. Biotechnol.">
        <title>ORFeome cloning and global analysis of protein localization in the fission yeast Schizosaccharomyces pombe.</title>
        <authorList>
            <person name="Matsuyama A."/>
            <person name="Arai R."/>
            <person name="Yashiroda Y."/>
            <person name="Shirai A."/>
            <person name="Kamata A."/>
            <person name="Sekido S."/>
            <person name="Kobayashi Y."/>
            <person name="Hashimoto A."/>
            <person name="Hamamoto M."/>
            <person name="Hiraoka Y."/>
            <person name="Horinouchi S."/>
            <person name="Yoshida M."/>
        </authorList>
    </citation>
    <scope>SUBCELLULAR LOCATION [LARGE SCALE ANALYSIS]</scope>
</reference>
<accession>O14235</accession>
<proteinExistence type="evidence at protein level"/>
<name>POF5_SCHPO</name>
<dbReference type="EMBL" id="CU329670">
    <property type="protein sequence ID" value="CAB11740.1"/>
    <property type="molecule type" value="Genomic_DNA"/>
</dbReference>
<dbReference type="PIR" id="T39036">
    <property type="entry name" value="T39036"/>
</dbReference>
<dbReference type="RefSeq" id="NP_593895.1">
    <property type="nucleotide sequence ID" value="NM_001019325.2"/>
</dbReference>
<dbReference type="SMR" id="O14235"/>
<dbReference type="BioGRID" id="279258">
    <property type="interactions" value="5"/>
</dbReference>
<dbReference type="FunCoup" id="O14235">
    <property type="interactions" value="345"/>
</dbReference>
<dbReference type="IntAct" id="O14235">
    <property type="interactions" value="1"/>
</dbReference>
<dbReference type="STRING" id="284812.O14235"/>
<dbReference type="PaxDb" id="4896-SPAC6F6.02c.1"/>
<dbReference type="EnsemblFungi" id="SPAC6F6.02c.1">
    <property type="protein sequence ID" value="SPAC6F6.02c.1:pep"/>
    <property type="gene ID" value="SPAC6F6.02c"/>
</dbReference>
<dbReference type="GeneID" id="2542810"/>
<dbReference type="KEGG" id="spo:2542810"/>
<dbReference type="PomBase" id="SPAC6F6.02c">
    <property type="gene designation" value="pof5"/>
</dbReference>
<dbReference type="VEuPathDB" id="FungiDB:SPAC6F6.02c"/>
<dbReference type="eggNOG" id="ENOG502QSAP">
    <property type="taxonomic scope" value="Eukaryota"/>
</dbReference>
<dbReference type="HOGENOM" id="CLU_042679_1_0_1"/>
<dbReference type="InParanoid" id="O14235"/>
<dbReference type="OMA" id="AINCWAS"/>
<dbReference type="PhylomeDB" id="O14235"/>
<dbReference type="PRO" id="PR:O14235"/>
<dbReference type="Proteomes" id="UP000002485">
    <property type="component" value="Chromosome I"/>
</dbReference>
<dbReference type="GO" id="GO:0005737">
    <property type="term" value="C:cytoplasm"/>
    <property type="evidence" value="ECO:0000318"/>
    <property type="project" value="GO_Central"/>
</dbReference>
<dbReference type="GO" id="GO:0005739">
    <property type="term" value="C:mitochondrion"/>
    <property type="evidence" value="ECO:0007669"/>
    <property type="project" value="UniProtKB-SubCell"/>
</dbReference>
<dbReference type="GO" id="GO:0000151">
    <property type="term" value="C:ubiquitin ligase complex"/>
    <property type="evidence" value="ECO:0000255"/>
    <property type="project" value="PomBase"/>
</dbReference>
<dbReference type="GO" id="GO:1990756">
    <property type="term" value="F:ubiquitin-like ligase-substrate adaptor activity"/>
    <property type="evidence" value="ECO:0000255"/>
    <property type="project" value="PomBase"/>
</dbReference>
<dbReference type="GO" id="GO:0043161">
    <property type="term" value="P:proteasome-mediated ubiquitin-dependent protein catabolic process"/>
    <property type="evidence" value="ECO:0000305"/>
    <property type="project" value="PomBase"/>
</dbReference>
<dbReference type="Gene3D" id="3.80.10.10">
    <property type="entry name" value="Ribonuclease Inhibitor"/>
    <property type="match status" value="1"/>
</dbReference>
<dbReference type="InterPro" id="IPR032675">
    <property type="entry name" value="LRR_dom_sf"/>
</dbReference>
<dbReference type="SUPFAM" id="SSF52047">
    <property type="entry name" value="RNI-like"/>
    <property type="match status" value="1"/>
</dbReference>